<comment type="function">
    <text evidence="1">Promotes RNA polymerase assembly. Latches the N- and C-terminal regions of the beta' subunit thereby facilitating its interaction with the beta and alpha subunits.</text>
</comment>
<comment type="catalytic activity">
    <reaction evidence="1">
        <text>RNA(n) + a ribonucleoside 5'-triphosphate = RNA(n+1) + diphosphate</text>
        <dbReference type="Rhea" id="RHEA:21248"/>
        <dbReference type="Rhea" id="RHEA-COMP:14527"/>
        <dbReference type="Rhea" id="RHEA-COMP:17342"/>
        <dbReference type="ChEBI" id="CHEBI:33019"/>
        <dbReference type="ChEBI" id="CHEBI:61557"/>
        <dbReference type="ChEBI" id="CHEBI:140395"/>
        <dbReference type="EC" id="2.7.7.6"/>
    </reaction>
</comment>
<comment type="subunit">
    <text evidence="1">The RNAP catalytic core consists of 2 alpha, 1 beta, 1 beta' and 1 omega subunit. When a sigma factor is associated with the core the holoenzyme is formed, which can initiate transcription.</text>
</comment>
<comment type="similarity">
    <text evidence="1">Belongs to the RNA polymerase subunit omega family.</text>
</comment>
<proteinExistence type="inferred from homology"/>
<feature type="chain" id="PRO_1000121278" description="DNA-directed RNA polymerase subunit omega">
    <location>
        <begin position="1"/>
        <end position="99"/>
    </location>
</feature>
<accession>B2FT05</accession>
<sequence>MARITVEDCLEVVNNRFELVMMASKRARQLANGVQATLDNSETEDKPTVLALREIAARKIDNALIDEVEKAERERAEREALEWAAAEVVADEDMSKNDD</sequence>
<reference key="1">
    <citation type="journal article" date="2008" name="Genome Biol.">
        <title>The complete genome, comparative and functional analysis of Stenotrophomonas maltophilia reveals an organism heavily shielded by drug resistance determinants.</title>
        <authorList>
            <person name="Crossman L.C."/>
            <person name="Gould V.C."/>
            <person name="Dow J.M."/>
            <person name="Vernikos G.S."/>
            <person name="Okazaki A."/>
            <person name="Sebaihia M."/>
            <person name="Saunders D."/>
            <person name="Arrowsmith C."/>
            <person name="Carver T."/>
            <person name="Peters N."/>
            <person name="Adlem E."/>
            <person name="Kerhornou A."/>
            <person name="Lord A."/>
            <person name="Murphy L."/>
            <person name="Seeger K."/>
            <person name="Squares R."/>
            <person name="Rutter S."/>
            <person name="Quail M.A."/>
            <person name="Rajandream M.A."/>
            <person name="Harris D."/>
            <person name="Churcher C."/>
            <person name="Bentley S.D."/>
            <person name="Parkhill J."/>
            <person name="Thomson N.R."/>
            <person name="Avison M.B."/>
        </authorList>
    </citation>
    <scope>NUCLEOTIDE SEQUENCE [LARGE SCALE GENOMIC DNA]</scope>
    <source>
        <strain>K279a</strain>
    </source>
</reference>
<evidence type="ECO:0000255" key="1">
    <source>
        <dbReference type="HAMAP-Rule" id="MF_00366"/>
    </source>
</evidence>
<dbReference type="EC" id="2.7.7.6" evidence="1"/>
<dbReference type="EMBL" id="AM743169">
    <property type="protein sequence ID" value="CAQ47247.1"/>
    <property type="molecule type" value="Genomic_DNA"/>
</dbReference>
<dbReference type="RefSeq" id="WP_005410877.1">
    <property type="nucleotide sequence ID" value="NC_010943.1"/>
</dbReference>
<dbReference type="SMR" id="B2FT05"/>
<dbReference type="EnsemblBacteria" id="CAQ47247">
    <property type="protein sequence ID" value="CAQ47247"/>
    <property type="gene ID" value="Smlt3841"/>
</dbReference>
<dbReference type="GeneID" id="97262492"/>
<dbReference type="KEGG" id="sml:Smlt3841"/>
<dbReference type="eggNOG" id="COG1758">
    <property type="taxonomic scope" value="Bacteria"/>
</dbReference>
<dbReference type="HOGENOM" id="CLU_125406_5_3_6"/>
<dbReference type="Proteomes" id="UP000008840">
    <property type="component" value="Chromosome"/>
</dbReference>
<dbReference type="GO" id="GO:0000428">
    <property type="term" value="C:DNA-directed RNA polymerase complex"/>
    <property type="evidence" value="ECO:0007669"/>
    <property type="project" value="UniProtKB-KW"/>
</dbReference>
<dbReference type="GO" id="GO:0003677">
    <property type="term" value="F:DNA binding"/>
    <property type="evidence" value="ECO:0007669"/>
    <property type="project" value="UniProtKB-UniRule"/>
</dbReference>
<dbReference type="GO" id="GO:0003899">
    <property type="term" value="F:DNA-directed RNA polymerase activity"/>
    <property type="evidence" value="ECO:0007669"/>
    <property type="project" value="UniProtKB-UniRule"/>
</dbReference>
<dbReference type="GO" id="GO:0006351">
    <property type="term" value="P:DNA-templated transcription"/>
    <property type="evidence" value="ECO:0007669"/>
    <property type="project" value="UniProtKB-UniRule"/>
</dbReference>
<dbReference type="Gene3D" id="3.90.940.10">
    <property type="match status" value="1"/>
</dbReference>
<dbReference type="HAMAP" id="MF_00366">
    <property type="entry name" value="RNApol_bact_RpoZ"/>
    <property type="match status" value="1"/>
</dbReference>
<dbReference type="InterPro" id="IPR003716">
    <property type="entry name" value="DNA-dir_RNA_pol_omega"/>
</dbReference>
<dbReference type="InterPro" id="IPR006110">
    <property type="entry name" value="Pol_omega/Rpo6/RPB6"/>
</dbReference>
<dbReference type="InterPro" id="IPR036161">
    <property type="entry name" value="RPB6/omega-like_sf"/>
</dbReference>
<dbReference type="NCBIfam" id="TIGR00690">
    <property type="entry name" value="rpoZ"/>
    <property type="match status" value="1"/>
</dbReference>
<dbReference type="PANTHER" id="PTHR34476">
    <property type="entry name" value="DNA-DIRECTED RNA POLYMERASE SUBUNIT OMEGA"/>
    <property type="match status" value="1"/>
</dbReference>
<dbReference type="PANTHER" id="PTHR34476:SF1">
    <property type="entry name" value="DNA-DIRECTED RNA POLYMERASE SUBUNIT OMEGA"/>
    <property type="match status" value="1"/>
</dbReference>
<dbReference type="Pfam" id="PF01192">
    <property type="entry name" value="RNA_pol_Rpb6"/>
    <property type="match status" value="1"/>
</dbReference>
<dbReference type="SMART" id="SM01409">
    <property type="entry name" value="RNA_pol_Rpb6"/>
    <property type="match status" value="1"/>
</dbReference>
<dbReference type="SUPFAM" id="SSF63562">
    <property type="entry name" value="RPB6/omega subunit-like"/>
    <property type="match status" value="1"/>
</dbReference>
<gene>
    <name evidence="1" type="primary">rpoZ</name>
    <name type="ordered locus">Smlt3841</name>
</gene>
<organism>
    <name type="scientific">Stenotrophomonas maltophilia (strain K279a)</name>
    <dbReference type="NCBI Taxonomy" id="522373"/>
    <lineage>
        <taxon>Bacteria</taxon>
        <taxon>Pseudomonadati</taxon>
        <taxon>Pseudomonadota</taxon>
        <taxon>Gammaproteobacteria</taxon>
        <taxon>Lysobacterales</taxon>
        <taxon>Lysobacteraceae</taxon>
        <taxon>Stenotrophomonas</taxon>
        <taxon>Stenotrophomonas maltophilia group</taxon>
    </lineage>
</organism>
<protein>
    <recommendedName>
        <fullName evidence="1">DNA-directed RNA polymerase subunit omega</fullName>
        <shortName evidence="1">RNAP omega subunit</shortName>
        <ecNumber evidence="1">2.7.7.6</ecNumber>
    </recommendedName>
    <alternativeName>
        <fullName evidence="1">RNA polymerase omega subunit</fullName>
    </alternativeName>
    <alternativeName>
        <fullName evidence="1">Transcriptase subunit omega</fullName>
    </alternativeName>
</protein>
<keyword id="KW-0240">DNA-directed RNA polymerase</keyword>
<keyword id="KW-0548">Nucleotidyltransferase</keyword>
<keyword id="KW-1185">Reference proteome</keyword>
<keyword id="KW-0804">Transcription</keyword>
<keyword id="KW-0808">Transferase</keyword>
<name>RPOZ_STRMK</name>